<sequence>MIVGHGIDLQEIEAITKAYERNQRFAERVLTEQELLLFKGISNPKRQMSFLTGRWAAKEAYSKALGTGIGKVNFHDIEILSDDKGAPLITKEPFNGKSFVSISHSGNYAQASVILEEEK</sequence>
<gene>
    <name evidence="1" type="primary">acpS</name>
    <name type="ordered locus">gbs1729</name>
</gene>
<comment type="function">
    <text evidence="1">Transfers the 4'-phosphopantetheine moiety from coenzyme A to a Ser of acyl-carrier-protein.</text>
</comment>
<comment type="catalytic activity">
    <reaction evidence="1">
        <text>apo-[ACP] + CoA = holo-[ACP] + adenosine 3',5'-bisphosphate + H(+)</text>
        <dbReference type="Rhea" id="RHEA:12068"/>
        <dbReference type="Rhea" id="RHEA-COMP:9685"/>
        <dbReference type="Rhea" id="RHEA-COMP:9690"/>
        <dbReference type="ChEBI" id="CHEBI:15378"/>
        <dbReference type="ChEBI" id="CHEBI:29999"/>
        <dbReference type="ChEBI" id="CHEBI:57287"/>
        <dbReference type="ChEBI" id="CHEBI:58343"/>
        <dbReference type="ChEBI" id="CHEBI:64479"/>
        <dbReference type="EC" id="2.7.8.7"/>
    </reaction>
</comment>
<comment type="cofactor">
    <cofactor evidence="1">
        <name>Mg(2+)</name>
        <dbReference type="ChEBI" id="CHEBI:18420"/>
    </cofactor>
</comment>
<comment type="subcellular location">
    <subcellularLocation>
        <location evidence="1">Cytoplasm</location>
    </subcellularLocation>
</comment>
<comment type="similarity">
    <text evidence="1">Belongs to the P-Pant transferase superfamily. AcpS family.</text>
</comment>
<keyword id="KW-0963">Cytoplasm</keyword>
<keyword id="KW-0275">Fatty acid biosynthesis</keyword>
<keyword id="KW-0276">Fatty acid metabolism</keyword>
<keyword id="KW-0444">Lipid biosynthesis</keyword>
<keyword id="KW-0443">Lipid metabolism</keyword>
<keyword id="KW-0460">Magnesium</keyword>
<keyword id="KW-0479">Metal-binding</keyword>
<keyword id="KW-0808">Transferase</keyword>
<reference key="1">
    <citation type="journal article" date="2002" name="Mol. Microbiol.">
        <title>Genome sequence of Streptococcus agalactiae, a pathogen causing invasive neonatal disease.</title>
        <authorList>
            <person name="Glaser P."/>
            <person name="Rusniok C."/>
            <person name="Buchrieser C."/>
            <person name="Chevalier F."/>
            <person name="Frangeul L."/>
            <person name="Msadek T."/>
            <person name="Zouine M."/>
            <person name="Couve E."/>
            <person name="Lalioui L."/>
            <person name="Poyart C."/>
            <person name="Trieu-Cuot P."/>
            <person name="Kunst F."/>
        </authorList>
    </citation>
    <scope>NUCLEOTIDE SEQUENCE [LARGE SCALE GENOMIC DNA]</scope>
    <source>
        <strain>NEM316</strain>
    </source>
</reference>
<protein>
    <recommendedName>
        <fullName evidence="1">Holo-[acyl-carrier-protein] synthase</fullName>
        <shortName evidence="1">Holo-ACP synthase</shortName>
        <ecNumber evidence="1">2.7.8.7</ecNumber>
    </recommendedName>
    <alternativeName>
        <fullName evidence="1">4'-phosphopantetheinyl transferase AcpS</fullName>
    </alternativeName>
</protein>
<dbReference type="EC" id="2.7.8.7" evidence="1"/>
<dbReference type="EMBL" id="AL766852">
    <property type="protein sequence ID" value="CAD47388.1"/>
    <property type="molecule type" value="Genomic_DNA"/>
</dbReference>
<dbReference type="RefSeq" id="WP_000635015.1">
    <property type="nucleotide sequence ID" value="NC_004368.1"/>
</dbReference>
<dbReference type="SMR" id="P63471"/>
<dbReference type="GeneID" id="66886531"/>
<dbReference type="KEGG" id="san:gbs1729"/>
<dbReference type="eggNOG" id="COG0736">
    <property type="taxonomic scope" value="Bacteria"/>
</dbReference>
<dbReference type="HOGENOM" id="CLU_089696_1_2_9"/>
<dbReference type="Proteomes" id="UP000000823">
    <property type="component" value="Chromosome"/>
</dbReference>
<dbReference type="GO" id="GO:0005737">
    <property type="term" value="C:cytoplasm"/>
    <property type="evidence" value="ECO:0007669"/>
    <property type="project" value="UniProtKB-SubCell"/>
</dbReference>
<dbReference type="GO" id="GO:0008897">
    <property type="term" value="F:holo-[acyl-carrier-protein] synthase activity"/>
    <property type="evidence" value="ECO:0007669"/>
    <property type="project" value="UniProtKB-UniRule"/>
</dbReference>
<dbReference type="GO" id="GO:0000287">
    <property type="term" value="F:magnesium ion binding"/>
    <property type="evidence" value="ECO:0007669"/>
    <property type="project" value="UniProtKB-UniRule"/>
</dbReference>
<dbReference type="GO" id="GO:0006633">
    <property type="term" value="P:fatty acid biosynthetic process"/>
    <property type="evidence" value="ECO:0007669"/>
    <property type="project" value="UniProtKB-UniRule"/>
</dbReference>
<dbReference type="Gene3D" id="3.90.470.20">
    <property type="entry name" value="4'-phosphopantetheinyl transferase domain"/>
    <property type="match status" value="1"/>
</dbReference>
<dbReference type="HAMAP" id="MF_00101">
    <property type="entry name" value="AcpS"/>
    <property type="match status" value="1"/>
</dbReference>
<dbReference type="InterPro" id="IPR008278">
    <property type="entry name" value="4-PPantetheinyl_Trfase_dom"/>
</dbReference>
<dbReference type="InterPro" id="IPR037143">
    <property type="entry name" value="4-PPantetheinyl_Trfase_dom_sf"/>
</dbReference>
<dbReference type="InterPro" id="IPR002582">
    <property type="entry name" value="ACPS"/>
</dbReference>
<dbReference type="InterPro" id="IPR004568">
    <property type="entry name" value="Ppantetheine-prot_Trfase_dom"/>
</dbReference>
<dbReference type="NCBIfam" id="TIGR00516">
    <property type="entry name" value="acpS"/>
    <property type="match status" value="1"/>
</dbReference>
<dbReference type="NCBIfam" id="TIGR00556">
    <property type="entry name" value="pantethn_trn"/>
    <property type="match status" value="1"/>
</dbReference>
<dbReference type="Pfam" id="PF01648">
    <property type="entry name" value="ACPS"/>
    <property type="match status" value="1"/>
</dbReference>
<dbReference type="SUPFAM" id="SSF56214">
    <property type="entry name" value="4'-phosphopantetheinyl transferase"/>
    <property type="match status" value="1"/>
</dbReference>
<name>ACPS_STRA3</name>
<accession>P63471</accession>
<accession>Q8DY09</accession>
<accession>Q8E3M8</accession>
<feature type="chain" id="PRO_0000175708" description="Holo-[acyl-carrier-protein] synthase">
    <location>
        <begin position="1"/>
        <end position="119"/>
    </location>
</feature>
<feature type="binding site" evidence="1">
    <location>
        <position position="8"/>
    </location>
    <ligand>
        <name>Mg(2+)</name>
        <dbReference type="ChEBI" id="CHEBI:18420"/>
    </ligand>
</feature>
<feature type="binding site" evidence="1">
    <location>
        <position position="59"/>
    </location>
    <ligand>
        <name>Mg(2+)</name>
        <dbReference type="ChEBI" id="CHEBI:18420"/>
    </ligand>
</feature>
<proteinExistence type="inferred from homology"/>
<evidence type="ECO:0000255" key="1">
    <source>
        <dbReference type="HAMAP-Rule" id="MF_00101"/>
    </source>
</evidence>
<organism>
    <name type="scientific">Streptococcus agalactiae serotype III (strain NEM316)</name>
    <dbReference type="NCBI Taxonomy" id="211110"/>
    <lineage>
        <taxon>Bacteria</taxon>
        <taxon>Bacillati</taxon>
        <taxon>Bacillota</taxon>
        <taxon>Bacilli</taxon>
        <taxon>Lactobacillales</taxon>
        <taxon>Streptococcaceae</taxon>
        <taxon>Streptococcus</taxon>
    </lineage>
</organism>